<feature type="chain" id="PRO_0000331644" description="Ubiquitin carboxyl-terminal hydrolase 17">
    <location>
        <begin position="1"/>
        <end position="530"/>
    </location>
</feature>
<feature type="domain" description="USP">
    <location>
        <begin position="80"/>
        <end position="375"/>
    </location>
</feature>
<feature type="region of interest" description="Disordered" evidence="2">
    <location>
        <begin position="382"/>
        <end position="416"/>
    </location>
</feature>
<feature type="region of interest" description="Mediates interaction with SUDS3" evidence="10">
    <location>
        <begin position="399"/>
        <end position="530"/>
    </location>
</feature>
<feature type="region of interest" description="Disordered" evidence="2">
    <location>
        <begin position="490"/>
        <end position="530"/>
    </location>
</feature>
<feature type="compositionally biased region" description="Basic and acidic residues" evidence="2">
    <location>
        <begin position="382"/>
        <end position="392"/>
    </location>
</feature>
<feature type="compositionally biased region" description="Basic and acidic residues" evidence="2">
    <location>
        <begin position="398"/>
        <end position="413"/>
    </location>
</feature>
<feature type="compositionally biased region" description="Polar residues" evidence="2">
    <location>
        <begin position="498"/>
        <end position="510"/>
    </location>
</feature>
<feature type="compositionally biased region" description="Basic residues" evidence="2">
    <location>
        <begin position="511"/>
        <end position="524"/>
    </location>
</feature>
<feature type="active site" description="Nucleophile">
    <location>
        <position position="89"/>
    </location>
</feature>
<feature type="active site" description="Proton acceptor" evidence="1">
    <location>
        <position position="334"/>
    </location>
</feature>
<feature type="sequence variant" id="VAR_059750" description="In dbSNP:rs12543578.">
    <original>K</original>
    <variation>R</variation>
    <location>
        <position position="438"/>
    </location>
</feature>
<feature type="mutagenesis site" description="Abolishes both enzymatic activity and effects on cell proliferation." evidence="3">
    <original>C</original>
    <variation>S</variation>
    <location>
        <position position="89"/>
    </location>
</feature>
<feature type="sequence conflict" description="In Ref. 1; AAR91701." evidence="12" ref="1">
    <original>K</original>
    <variation>E</variation>
    <location>
        <position position="66"/>
    </location>
</feature>
<feature type="sequence conflict" description="In Ref. 1; AAR91701." evidence="12" ref="1">
    <original>S</original>
    <variation>P</variation>
    <location>
        <position position="214"/>
    </location>
</feature>
<feature type="sequence conflict" description="In Ref. 1; AAR91701." evidence="12" ref="1">
    <original>D</original>
    <variation>N</variation>
    <location>
        <position position="332"/>
    </location>
</feature>
<feature type="sequence conflict" description="In Ref. 1; AAR91701." evidence="12" ref="1">
    <original>K</original>
    <variation>E</variation>
    <location>
        <position position="353"/>
    </location>
</feature>
<feature type="sequence conflict" description="In Ref. 1; AAR91701." evidence="12" ref="1">
    <original>C</original>
    <variation>S</variation>
    <location>
        <position position="357"/>
    </location>
</feature>
<feature type="sequence conflict" description="In Ref. 1; AAR91701." evidence="12" ref="1">
    <original>R</original>
    <variation>H</variation>
    <location>
        <position position="423"/>
    </location>
</feature>
<feature type="sequence conflict" description="In Ref. 1; AAR91701." evidence="12" ref="1">
    <original>P</original>
    <variation>L</variation>
    <location>
        <position position="440"/>
    </location>
</feature>
<feature type="sequence conflict" description="In Ref. 1; AAR91701." evidence="12" ref="1">
    <original>N</original>
    <variation>D</variation>
    <location>
        <position position="462"/>
    </location>
</feature>
<feature type="sequence conflict" description="In Ref. 1; AAR91701." evidence="12" ref="1">
    <original>R</original>
    <variation>P</variation>
    <location>
        <position position="494"/>
    </location>
</feature>
<feature type="sequence conflict" description="In Ref. 1; AAR91701." evidence="12" ref="1">
    <original>D</original>
    <variation>H</variation>
    <location>
        <position position="496"/>
    </location>
</feature>
<feature type="sequence conflict" description="In Ref. 1; AAR91701." evidence="12" ref="1">
    <original>V</original>
    <variation>M</variation>
    <location>
        <position position="500"/>
    </location>
</feature>
<feature type="sequence conflict" description="In Ref. 1; AAR91701." evidence="12" ref="1">
    <original>Q</original>
    <variation>R</variation>
    <location>
        <position position="509"/>
    </location>
</feature>
<feature type="sequence conflict" description="In Ref. 1; AAR91701." evidence="12" ref="1">
    <original>T</original>
    <variation>A</variation>
    <location>
        <position position="512"/>
    </location>
</feature>
<protein>
    <recommendedName>
        <fullName>Ubiquitin carboxyl-terminal hydrolase 17</fullName>
        <shortName>USP17</shortName>
        <ecNumber evidence="3 7 8">3.4.19.12</ecNumber>
    </recommendedName>
    <alternativeName>
        <fullName>Deubiquitinating enzyme 17-like protein 2</fullName>
    </alternativeName>
    <alternativeName>
        <fullName>Deubiquitinating protein 3</fullName>
        <shortName>DUB-3</shortName>
    </alternativeName>
    <alternativeName>
        <fullName>Ubiquitin carboxyl-terminal hydrolase 17-like protein 2</fullName>
    </alternativeName>
    <alternativeName>
        <fullName>Ubiquitin thioesterase 17-like protein 2</fullName>
    </alternativeName>
    <alternativeName>
        <fullName>Ubiquitin-specific-processing protease 17-like protein 2</fullName>
    </alternativeName>
</protein>
<name>U17L2_HUMAN</name>
<reference key="1">
    <citation type="journal article" date="2004" name="J. Biol. Chem.">
        <title>DUB-3, a cytokine-inducible deubiquitinating enzyme that blocks proliferation.</title>
        <authorList>
            <person name="Burrows J.F."/>
            <person name="McGrattan M.J."/>
            <person name="Rascle A."/>
            <person name="Humbert M."/>
            <person name="Baek K.-H."/>
            <person name="Johnston J.A."/>
        </authorList>
    </citation>
    <scope>NUCLEOTIDE SEQUENCE [MRNA]</scope>
    <scope>FUNCTION</scope>
    <scope>CATALYTIC ACTIVITY</scope>
    <scope>INDUCTION BY CYTOKINES</scope>
    <scope>TISSUE SPECIFICITY</scope>
    <scope>MUTAGENESIS OF CYS-89</scope>
</reference>
<reference key="2">
    <citation type="journal article" date="2006" name="Nature">
        <title>DNA sequence and analysis of human chromosome 8.</title>
        <authorList>
            <person name="Nusbaum C."/>
            <person name="Mikkelsen T.S."/>
            <person name="Zody M.C."/>
            <person name="Asakawa S."/>
            <person name="Taudien S."/>
            <person name="Garber M."/>
            <person name="Kodira C.D."/>
            <person name="Schueler M.G."/>
            <person name="Shimizu A."/>
            <person name="Whittaker C.A."/>
            <person name="Chang J.L."/>
            <person name="Cuomo C.A."/>
            <person name="Dewar K."/>
            <person name="FitzGerald M.G."/>
            <person name="Yang X."/>
            <person name="Allen N.R."/>
            <person name="Anderson S."/>
            <person name="Asakawa T."/>
            <person name="Blechschmidt K."/>
            <person name="Bloom T."/>
            <person name="Borowsky M.L."/>
            <person name="Butler J."/>
            <person name="Cook A."/>
            <person name="Corum B."/>
            <person name="DeArellano K."/>
            <person name="DeCaprio D."/>
            <person name="Dooley K.T."/>
            <person name="Dorris L. III"/>
            <person name="Engels R."/>
            <person name="Gloeckner G."/>
            <person name="Hafez N."/>
            <person name="Hagopian D.S."/>
            <person name="Hall J.L."/>
            <person name="Ishikawa S.K."/>
            <person name="Jaffe D.B."/>
            <person name="Kamat A."/>
            <person name="Kudoh J."/>
            <person name="Lehmann R."/>
            <person name="Lokitsang T."/>
            <person name="Macdonald P."/>
            <person name="Major J.E."/>
            <person name="Matthews C.D."/>
            <person name="Mauceli E."/>
            <person name="Menzel U."/>
            <person name="Mihalev A.H."/>
            <person name="Minoshima S."/>
            <person name="Murayama Y."/>
            <person name="Naylor J.W."/>
            <person name="Nicol R."/>
            <person name="Nguyen C."/>
            <person name="O'Leary S.B."/>
            <person name="O'Neill K."/>
            <person name="Parker S.C.J."/>
            <person name="Polley A."/>
            <person name="Raymond C.K."/>
            <person name="Reichwald K."/>
            <person name="Rodriguez J."/>
            <person name="Sasaki T."/>
            <person name="Schilhabel M."/>
            <person name="Siddiqui R."/>
            <person name="Smith C.L."/>
            <person name="Sneddon T.P."/>
            <person name="Talamas J.A."/>
            <person name="Tenzin P."/>
            <person name="Topham K."/>
            <person name="Venkataraman V."/>
            <person name="Wen G."/>
            <person name="Yamazaki S."/>
            <person name="Young S.K."/>
            <person name="Zeng Q."/>
            <person name="Zimmer A.R."/>
            <person name="Rosenthal A."/>
            <person name="Birren B.W."/>
            <person name="Platzer M."/>
            <person name="Shimizu N."/>
            <person name="Lander E.S."/>
        </authorList>
    </citation>
    <scope>NUCLEOTIDE SEQUENCE [LARGE SCALE GENOMIC DNA]</scope>
</reference>
<reference key="3">
    <citation type="journal article" date="2005" name="Genomics">
        <title>The DUB/USP17 deubiquitinating enzymes, a multigene family within a tandemly repeated sequence.</title>
        <authorList>
            <person name="Burrows J.F."/>
            <person name="McGrattan M.J."/>
            <person name="Johnston J.A."/>
        </authorList>
    </citation>
    <scope>NOMENCLATURE</scope>
</reference>
<reference key="4">
    <citation type="journal article" date="2006" name="BMC Genomics">
        <title>Hyaluronan- and RNA-binding deubiquitinating enzymes of USP17 family members associated with cell viability.</title>
        <authorList>
            <person name="Shin J.-M."/>
            <person name="Yoo K.-J."/>
            <person name="Kim M.-S."/>
            <person name="Kim D."/>
            <person name="Baek K.-H."/>
        </authorList>
    </citation>
    <scope>NOMENCLATURE</scope>
    <scope>FUNCTION IN APOPTOSIS</scope>
</reference>
<reference key="5">
    <citation type="journal article" date="2009" name="J. Biol. Chem.">
        <title>USP17 regulates Ras activation and cell proliferation by blocking RCE1 activity.</title>
        <authorList>
            <person name="Burrows J.F."/>
            <person name="Kelvin A.A."/>
            <person name="McFarlane C."/>
            <person name="Burden R.E."/>
            <person name="McGrattan M.J."/>
            <person name="De la Vega M."/>
            <person name="Govender U."/>
            <person name="Quinn D.J."/>
            <person name="Dib K."/>
            <person name="Gadina M."/>
            <person name="Scott C.J."/>
            <person name="Johnston J.A."/>
        </authorList>
    </citation>
    <scope>FUNCTION IN CELL PROLIFERATION</scope>
    <scope>SUBCELLULAR LOCATION</scope>
</reference>
<reference key="6">
    <citation type="journal article" date="2010" name="BMC Genomics">
        <title>The DUB/USP17 deubiquitinating enzymes: a gene family within a tandemly repeated sequence, is also embedded within the copy number variable beta-defensin cluster.</title>
        <authorList>
            <person name="Burrows J.F."/>
            <person name="Scott C.J."/>
            <person name="Johnston J.A."/>
        </authorList>
    </citation>
    <scope>IDENTIFICATION</scope>
</reference>
<reference key="7">
    <citation type="journal article" date="2010" name="Cancer Res.">
        <title>The deubiquitinating enzyme USP17 is highly expressed in tumor biopsies, is cell cycle regulated, and is required for G1-S progression.</title>
        <authorList>
            <person name="McFarlane C."/>
            <person name="Kelvin A.A."/>
            <person name="de la Vega M."/>
            <person name="Govender U."/>
            <person name="Scott C.J."/>
            <person name="Burrows J.F."/>
            <person name="Johnston J.A."/>
        </authorList>
    </citation>
    <scope>FUNCTION</scope>
    <scope>INDUCTION</scope>
</reference>
<reference key="8">
    <citation type="journal article" date="2010" name="Cell Res.">
        <title>The ubiquitin-specific protease 17 is involved in virus-triggered type I IFN signaling.</title>
        <authorList>
            <person name="Chen R."/>
            <person name="Zhang L."/>
            <person name="Zhong B."/>
            <person name="Tan B."/>
            <person name="Liu Y."/>
            <person name="Shu H.B."/>
        </authorList>
    </citation>
    <scope>CATALYTIC ACTIVITY</scope>
    <scope>FUNCTION IN CELLULAR ANTIVIRAL RESPONSE</scope>
</reference>
<reference key="9">
    <citation type="journal article" date="2010" name="J. Biol. Chem.">
        <title>The deubiquitinating enzyme USP17 blocks N-Ras membrane trafficking and activation but leaves K-Ras unaffected.</title>
        <authorList>
            <person name="de la Vega M."/>
            <person name="Burrows J.F."/>
            <person name="McFarlane C."/>
            <person name="Govender U."/>
            <person name="Scott C.J."/>
            <person name="Johnston J.A."/>
        </authorList>
    </citation>
    <scope>FUNCTION</scope>
</reference>
<reference key="10">
    <citation type="journal article" date="2010" name="Nat. Cell Biol.">
        <title>Ubiquitin hydrolase Dub3 promotes oncogenic transformation by stabilizing Cdc25A.</title>
        <authorList>
            <person name="Pereg Y."/>
            <person name="Liu B.Y."/>
            <person name="O'Rourke K.M."/>
            <person name="Sagolla M."/>
            <person name="Dey A."/>
            <person name="Komuves L."/>
            <person name="French D.M."/>
            <person name="Dixit V.M."/>
        </authorList>
    </citation>
    <scope>CATALYTIC ACTIVITY</scope>
    <scope>FUNCTION IN CELL PROLIFERATION</scope>
</reference>
<reference key="11">
    <citation type="journal article" date="2011" name="J. Biol. Chem.">
        <title>Lys-63-specific deubiquitination of SDS3 by USP17 regulates HDAC activity.</title>
        <authorList>
            <person name="Ramakrishna S."/>
            <person name="Suresh B."/>
            <person name="Lee E.J."/>
            <person name="Lee H.J."/>
            <person name="Ahn W.S."/>
            <person name="Baek K.H."/>
        </authorList>
    </citation>
    <scope>FUNCTION</scope>
    <scope>INTERACTION WITH SUDS3</scope>
    <scope>SUBCELLULAR LOCATION</scope>
</reference>
<reference key="12">
    <citation type="journal article" date="2011" name="Nat. Commun.">
        <title>The deubiquitinating enzyme USP17 is essential for GTPase subcellular localization and cell motility.</title>
        <authorList>
            <person name="de la Vega M."/>
            <person name="Kelvin A.A."/>
            <person name="Dunican D.J."/>
            <person name="McFarlane C."/>
            <person name="Burrows J.F."/>
            <person name="Jaworski J."/>
            <person name="Stevenson N.J."/>
            <person name="Dib K."/>
            <person name="Rappoport J.Z."/>
            <person name="Scott C.J."/>
            <person name="Long A."/>
            <person name="Johnston J.A."/>
        </authorList>
    </citation>
    <scope>FUNCTION IN CELL MIGRATION</scope>
    <scope>INDUCTION BY CHEMOKINE</scope>
</reference>
<organism>
    <name type="scientific">Homo sapiens</name>
    <name type="common">Human</name>
    <dbReference type="NCBI Taxonomy" id="9606"/>
    <lineage>
        <taxon>Eukaryota</taxon>
        <taxon>Metazoa</taxon>
        <taxon>Chordata</taxon>
        <taxon>Craniata</taxon>
        <taxon>Vertebrata</taxon>
        <taxon>Euteleostomi</taxon>
        <taxon>Mammalia</taxon>
        <taxon>Eutheria</taxon>
        <taxon>Euarchontoglires</taxon>
        <taxon>Primates</taxon>
        <taxon>Haplorrhini</taxon>
        <taxon>Catarrhini</taxon>
        <taxon>Hominidae</taxon>
        <taxon>Homo</taxon>
    </lineage>
</organism>
<keyword id="KW-0053">Apoptosis</keyword>
<keyword id="KW-0131">Cell cycle</keyword>
<keyword id="KW-0256">Endoplasmic reticulum</keyword>
<keyword id="KW-0378">Hydrolase</keyword>
<keyword id="KW-0539">Nucleus</keyword>
<keyword id="KW-0645">Protease</keyword>
<keyword id="KW-1185">Reference proteome</keyword>
<keyword id="KW-0788">Thiol protease</keyword>
<keyword id="KW-0833">Ubl conjugation pathway</keyword>
<gene>
    <name type="primary">USP17L2</name>
    <name type="synonym">DUB3</name>
    <name type="synonym">USP17</name>
    <name type="synonym">USP17H</name>
    <name type="synonym">USP17I</name>
    <name type="synonym">USP17J</name>
    <name type="synonym">USP17K</name>
    <name type="synonym">USP17L</name>
    <name type="synonym">USP17M</name>
</gene>
<comment type="function">
    <text evidence="3 4 5 6 7 8 9 10 11">Deubiquitinating enzyme that removes conjugated ubiquitin from specific proteins to regulate different cellular processes. Regulates cell proliferation by deubiquitinating and inhibiting RCE1 thereby controlling the small GTPases NRAS and HRAS localization and activation. In parallel, mediates deubiquitination of CDC25A, preventing CDC25A degradation by the proteasome during the G1/S and G2/M phases promoting cell-cycle progression. Also regulates cell proliferation and apoptosis through deubiquitination of SUDS3 a regulator of histone deacetylation. Through activation of the Rho family GTPases RAC1A, CDC42 and RHOA, regulates cell migration. Through the cleavage of 'Lys-48'- and 'Lys-63'-linked polyubiquitin chains of the cytoplasmic innate immune receptors RIGI and IFIH1 stimulates the cellular response to viral infection.</text>
</comment>
<comment type="catalytic activity">
    <reaction evidence="3 7 8">
        <text>Thiol-dependent hydrolysis of ester, thioester, amide, peptide and isopeptide bonds formed by the C-terminal Gly of ubiquitin (a 76-residue protein attached to proteins as an intracellular targeting signal).</text>
        <dbReference type="EC" id="3.4.19.12"/>
    </reaction>
</comment>
<comment type="subunit">
    <text evidence="10">Interacts with SUDS3; the interaction is direct.</text>
</comment>
<comment type="subcellular location">
    <subcellularLocation>
        <location evidence="10">Nucleus</location>
    </subcellularLocation>
    <subcellularLocation>
        <location evidence="5">Endoplasmic reticulum</location>
    </subcellularLocation>
</comment>
<comment type="tissue specificity">
    <text evidence="3">Broadly expressed.</text>
</comment>
<comment type="induction">
    <text evidence="3 9 11">Up-regulated by IL4/interleukin-4, IL6/interleukin-6 and chemokines including CXCL8 and CXCL12 (at protein level). Up-regulated during the G1/S transition of the cell cycle.</text>
</comment>
<comment type="miscellaneous">
    <text evidence="13">Overexpressed in a subset of human breast cancers, overexpression leading to an abnormally high level of CDC25A, which arrests cells through replication stress or premature mitosis, the latter occurring when CDK1 is activated inappropriately.</text>
</comment>
<comment type="similarity">
    <text evidence="12">Belongs to the peptidase C19 family. USP17 subfamily.</text>
</comment>
<comment type="caution">
    <text evidence="12">The RS447 megasatellite DNA is a highly polymorphic conserved tandem repetitive sequence which contains a copy of the USP17 gene. It is present with an interindividual variation in copy number, ranging from 20 to 103, and can be found in the genome both on chromosome 4 and chromosome 8. USP17 is also frequently named DUB3 in the literature. The high similarity between the UPS17-like genes makes impossible to clearly assign data to one of the genes of the family. Oligonucleotides designed in RNAi experiments are for instance not specific of a given UPS17-like gene.</text>
</comment>
<proteinExistence type="evidence at protein level"/>
<evidence type="ECO:0000255" key="1">
    <source>
        <dbReference type="PROSITE-ProRule" id="PRU10093"/>
    </source>
</evidence>
<evidence type="ECO:0000256" key="2">
    <source>
        <dbReference type="SAM" id="MobiDB-lite"/>
    </source>
</evidence>
<evidence type="ECO:0000269" key="3">
    <source>
    </source>
</evidence>
<evidence type="ECO:0000269" key="4">
    <source>
    </source>
</evidence>
<evidence type="ECO:0000269" key="5">
    <source>
    </source>
</evidence>
<evidence type="ECO:0000269" key="6">
    <source>
    </source>
</evidence>
<evidence type="ECO:0000269" key="7">
    <source>
    </source>
</evidence>
<evidence type="ECO:0000269" key="8">
    <source>
    </source>
</evidence>
<evidence type="ECO:0000269" key="9">
    <source>
    </source>
</evidence>
<evidence type="ECO:0000269" key="10">
    <source>
    </source>
</evidence>
<evidence type="ECO:0000269" key="11">
    <source>
    </source>
</evidence>
<evidence type="ECO:0000305" key="12"/>
<evidence type="ECO:0000305" key="13">
    <source>
    </source>
</evidence>
<sequence length="530" mass="59619">MEDDSLYLGGEWQFNHFSKLTSSRPDAAFAEIQRTSLPEKSPLSSEARVDLCDDLAPVARQLAPRKKLPLSSRRPAAVGAGLQNMGNTCYENASLQCLTYTPPLANYMLSREHSQTCQRPKCCMLCTMQAHITWALHSPGHVIQPSQALAAGFHRGKQEDAHEFLMFTVDAMKKACLPGHKQVDHHSKDTTLIHQIFGGCWRSQIKCLHCHGISDTFDPYLDIALDIQAAQSVKQALEQLVKPEELNGENAYHCGLCLQRAPASKTLTLHTSAKVLILVLKRFSDVTGNKLAKNVQYPECLDMQPYMSQQNTGPLVYVLYAVLVHAGWSCHDGHYFSYVKAQEGQWYKMDDAKVTACSITSVLSQQAYVLFYIQKSEWERHSESVSRGREPRALGAEDTDRRATQGELKRDHPCLQAPELDERLVERATQESTLDHWKFPQEQNKTKPEFNVRKVEGTLPPNVLVIHQSKYKCGMKNHHPEQQSSLLNLSSTTRTDQESVNTGTLASLQGRTRRSKGKNKHSKRALLVCQ</sequence>
<accession>Q6R6M4</accession>
<dbReference type="EC" id="3.4.19.12" evidence="3 7 8"/>
<dbReference type="EMBL" id="AY509884">
    <property type="protein sequence ID" value="AAR91701.1"/>
    <property type="molecule type" value="mRNA"/>
</dbReference>
<dbReference type="EMBL" id="AC130366">
    <property type="status" value="NOT_ANNOTATED_CDS"/>
    <property type="molecule type" value="Genomic_DNA"/>
</dbReference>
<dbReference type="CCDS" id="CCDS43713.1"/>
<dbReference type="RefSeq" id="NP_958804.2">
    <property type="nucleotide sequence ID" value="NM_201402.3"/>
</dbReference>
<dbReference type="SMR" id="Q6R6M4"/>
<dbReference type="BioGRID" id="132019">
    <property type="interactions" value="32"/>
</dbReference>
<dbReference type="FunCoup" id="Q6R6M4">
    <property type="interactions" value="64"/>
</dbReference>
<dbReference type="IntAct" id="Q6R6M4">
    <property type="interactions" value="4"/>
</dbReference>
<dbReference type="STRING" id="9606.ENSP00000333329"/>
<dbReference type="BindingDB" id="Q6R6M4"/>
<dbReference type="ChEMBL" id="CHEMBL3739248"/>
<dbReference type="MEROPS" id="C19.023"/>
<dbReference type="MEROPS" id="C19.A83"/>
<dbReference type="iPTMnet" id="Q6R6M4"/>
<dbReference type="PhosphoSitePlus" id="Q6R6M4"/>
<dbReference type="BioMuta" id="USP17L2"/>
<dbReference type="DMDM" id="187663988"/>
<dbReference type="PaxDb" id="9606-ENSP00000333329"/>
<dbReference type="Antibodypedia" id="22144">
    <property type="antibodies" value="119 antibodies from 20 providers"/>
</dbReference>
<dbReference type="DNASU" id="377630"/>
<dbReference type="Ensembl" id="ENST00000333796.4">
    <property type="protein sequence ID" value="ENSP00000333329.3"/>
    <property type="gene ID" value="ENSG00000223443.3"/>
</dbReference>
<dbReference type="GeneID" id="377630"/>
<dbReference type="KEGG" id="hsa:377630"/>
<dbReference type="MANE-Select" id="ENST00000333796.4">
    <property type="protein sequence ID" value="ENSP00000333329.3"/>
    <property type="RefSeq nucleotide sequence ID" value="NM_201402.3"/>
    <property type="RefSeq protein sequence ID" value="NP_958804.2"/>
</dbReference>
<dbReference type="UCSC" id="uc003wvc.2">
    <property type="organism name" value="human"/>
</dbReference>
<dbReference type="AGR" id="HGNC:34434"/>
<dbReference type="CTD" id="377630"/>
<dbReference type="DisGeNET" id="377630"/>
<dbReference type="GeneCards" id="USP17L2"/>
<dbReference type="HGNC" id="HGNC:34434">
    <property type="gene designation" value="USP17L2"/>
</dbReference>
<dbReference type="HPA" id="ENSG00000223443">
    <property type="expression patterns" value="Not detected"/>
</dbReference>
<dbReference type="MIM" id="610186">
    <property type="type" value="gene"/>
</dbReference>
<dbReference type="neXtProt" id="NX_Q6R6M4"/>
<dbReference type="OpenTargets" id="ENSG00000223443"/>
<dbReference type="PharmGKB" id="PA165586023"/>
<dbReference type="VEuPathDB" id="HostDB:ENSG00000223443"/>
<dbReference type="eggNOG" id="KOG1865">
    <property type="taxonomic scope" value="Eukaryota"/>
</dbReference>
<dbReference type="GeneTree" id="ENSGT00940000161948"/>
<dbReference type="HOGENOM" id="CLU_008279_10_0_1"/>
<dbReference type="InParanoid" id="Q6R6M4"/>
<dbReference type="OMA" id="GENDYHC"/>
<dbReference type="OrthoDB" id="9523253at2759"/>
<dbReference type="PAN-GO" id="Q6R6M4">
    <property type="GO annotations" value="6 GO annotations based on evolutionary models"/>
</dbReference>
<dbReference type="PhylomeDB" id="Q6R6M4"/>
<dbReference type="TreeFam" id="TF315281"/>
<dbReference type="PathwayCommons" id="Q6R6M4"/>
<dbReference type="Reactome" id="R-HSA-5689880">
    <property type="pathway name" value="Ub-specific processing proteases"/>
</dbReference>
<dbReference type="Reactome" id="R-HSA-9648002">
    <property type="pathway name" value="RAS processing"/>
</dbReference>
<dbReference type="SABIO-RK" id="Q6R6M4"/>
<dbReference type="SignaLink" id="Q6R6M4"/>
<dbReference type="SIGNOR" id="Q6R6M4"/>
<dbReference type="BioGRID-ORCS" id="377630">
    <property type="hits" value="17 hits in 1045 CRISPR screens"/>
</dbReference>
<dbReference type="GenomeRNAi" id="377630"/>
<dbReference type="Pharos" id="Q6R6M4">
    <property type="development level" value="Tbio"/>
</dbReference>
<dbReference type="PRO" id="PR:Q6R6M4"/>
<dbReference type="Proteomes" id="UP000005640">
    <property type="component" value="Chromosome 8"/>
</dbReference>
<dbReference type="RNAct" id="Q6R6M4">
    <property type="molecule type" value="protein"/>
</dbReference>
<dbReference type="Bgee" id="ENSG00000223443">
    <property type="expression patterns" value="Expressed in male germ line stem cell (sensu Vertebrata) in testis and 33 other cell types or tissues"/>
</dbReference>
<dbReference type="GO" id="GO:0005829">
    <property type="term" value="C:cytosol"/>
    <property type="evidence" value="ECO:0000318"/>
    <property type="project" value="GO_Central"/>
</dbReference>
<dbReference type="GO" id="GO:0005789">
    <property type="term" value="C:endoplasmic reticulum membrane"/>
    <property type="evidence" value="ECO:0000314"/>
    <property type="project" value="UniProtKB"/>
</dbReference>
<dbReference type="GO" id="GO:0005634">
    <property type="term" value="C:nucleus"/>
    <property type="evidence" value="ECO:0000314"/>
    <property type="project" value="UniProtKB"/>
</dbReference>
<dbReference type="GO" id="GO:0004843">
    <property type="term" value="F:cysteine-type deubiquitinase activity"/>
    <property type="evidence" value="ECO:0000314"/>
    <property type="project" value="UniProtKB"/>
</dbReference>
<dbReference type="GO" id="GO:0006915">
    <property type="term" value="P:apoptotic process"/>
    <property type="evidence" value="ECO:0007669"/>
    <property type="project" value="UniProtKB-KW"/>
</dbReference>
<dbReference type="GO" id="GO:0071586">
    <property type="term" value="P:CAAX-box protein processing"/>
    <property type="evidence" value="ECO:0000315"/>
    <property type="project" value="UniProtKB"/>
</dbReference>
<dbReference type="GO" id="GO:0000165">
    <property type="term" value="P:MAPK cascade"/>
    <property type="evidence" value="ECO:0000304"/>
    <property type="project" value="Reactome"/>
</dbReference>
<dbReference type="GO" id="GO:0034260">
    <property type="term" value="P:negative regulation of GTPase activity"/>
    <property type="evidence" value="ECO:0000314"/>
    <property type="project" value="UniProtKB"/>
</dbReference>
<dbReference type="GO" id="GO:0010955">
    <property type="term" value="P:negative regulation of protein processing"/>
    <property type="evidence" value="ECO:0000315"/>
    <property type="project" value="UniProtKB"/>
</dbReference>
<dbReference type="GO" id="GO:0090315">
    <property type="term" value="P:negative regulation of protein targeting to membrane"/>
    <property type="evidence" value="ECO:0000315"/>
    <property type="project" value="UniProtKB"/>
</dbReference>
<dbReference type="GO" id="GO:0043547">
    <property type="term" value="P:positive regulation of GTPase activity"/>
    <property type="evidence" value="ECO:0000315"/>
    <property type="project" value="UniProtKB"/>
</dbReference>
<dbReference type="GO" id="GO:1900245">
    <property type="term" value="P:positive regulation of MDA-5 signaling pathway"/>
    <property type="evidence" value="ECO:0000315"/>
    <property type="project" value="UniProtKB"/>
</dbReference>
<dbReference type="GO" id="GO:1900246">
    <property type="term" value="P:positive regulation of RIG-I signaling pathway"/>
    <property type="evidence" value="ECO:0000315"/>
    <property type="project" value="UniProtKB"/>
</dbReference>
<dbReference type="GO" id="GO:0016579">
    <property type="term" value="P:protein deubiquitination"/>
    <property type="evidence" value="ECO:0000314"/>
    <property type="project" value="UniProtKB"/>
</dbReference>
<dbReference type="GO" id="GO:0071108">
    <property type="term" value="P:protein K48-linked deubiquitination"/>
    <property type="evidence" value="ECO:0000315"/>
    <property type="project" value="UniProtKB"/>
</dbReference>
<dbReference type="GO" id="GO:0070536">
    <property type="term" value="P:protein K63-linked deubiquitination"/>
    <property type="evidence" value="ECO:0000315"/>
    <property type="project" value="UniProtKB"/>
</dbReference>
<dbReference type="GO" id="GO:0042981">
    <property type="term" value="P:regulation of apoptotic process"/>
    <property type="evidence" value="ECO:0000318"/>
    <property type="project" value="GO_Central"/>
</dbReference>
<dbReference type="GO" id="GO:0030334">
    <property type="term" value="P:regulation of cell migration"/>
    <property type="evidence" value="ECO:0000315"/>
    <property type="project" value="UniProtKB"/>
</dbReference>
<dbReference type="GO" id="GO:0042127">
    <property type="term" value="P:regulation of cell population proliferation"/>
    <property type="evidence" value="ECO:0000315"/>
    <property type="project" value="UniProtKB"/>
</dbReference>
<dbReference type="GO" id="GO:0050691">
    <property type="term" value="P:regulation of defense response to virus by host"/>
    <property type="evidence" value="ECO:0000315"/>
    <property type="project" value="UniProtKB"/>
</dbReference>
<dbReference type="GO" id="GO:0110030">
    <property type="term" value="P:regulation of G2/MI transition of meiotic cell cycle"/>
    <property type="evidence" value="ECO:0000315"/>
    <property type="project" value="UniProtKB"/>
</dbReference>
<dbReference type="GO" id="GO:0031647">
    <property type="term" value="P:regulation of protein stability"/>
    <property type="evidence" value="ECO:0000318"/>
    <property type="project" value="GO_Central"/>
</dbReference>
<dbReference type="GO" id="GO:1900027">
    <property type="term" value="P:regulation of ruffle assembly"/>
    <property type="evidence" value="ECO:0000315"/>
    <property type="project" value="UniProtKB"/>
</dbReference>
<dbReference type="CDD" id="cd02661">
    <property type="entry name" value="Peptidase_C19E"/>
    <property type="match status" value="1"/>
</dbReference>
<dbReference type="FunFam" id="3.90.70.10:FF:000070">
    <property type="entry name" value="Ubiquitin carboxyl-terminal hydrolase 17-like protein 17"/>
    <property type="match status" value="1"/>
</dbReference>
<dbReference type="Gene3D" id="3.90.70.10">
    <property type="entry name" value="Cysteine proteinases"/>
    <property type="match status" value="1"/>
</dbReference>
<dbReference type="InterPro" id="IPR038765">
    <property type="entry name" value="Papain-like_cys_pep_sf"/>
</dbReference>
<dbReference type="InterPro" id="IPR050164">
    <property type="entry name" value="Peptidase_C19"/>
</dbReference>
<dbReference type="InterPro" id="IPR001394">
    <property type="entry name" value="Peptidase_C19_UCH"/>
</dbReference>
<dbReference type="InterPro" id="IPR018200">
    <property type="entry name" value="USP_CS"/>
</dbReference>
<dbReference type="InterPro" id="IPR028889">
    <property type="entry name" value="USP_dom"/>
</dbReference>
<dbReference type="PANTHER" id="PTHR24006:SF651">
    <property type="entry name" value="INACTIVE UBIQUITIN CARBOXYL-TERMINAL HYDROLASE 17-LIKE PROTEIN 4-RELATED"/>
    <property type="match status" value="1"/>
</dbReference>
<dbReference type="PANTHER" id="PTHR24006">
    <property type="entry name" value="UBIQUITIN CARBOXYL-TERMINAL HYDROLASE"/>
    <property type="match status" value="1"/>
</dbReference>
<dbReference type="Pfam" id="PF00443">
    <property type="entry name" value="UCH"/>
    <property type="match status" value="1"/>
</dbReference>
<dbReference type="SUPFAM" id="SSF54001">
    <property type="entry name" value="Cysteine proteinases"/>
    <property type="match status" value="1"/>
</dbReference>
<dbReference type="PROSITE" id="PS00973">
    <property type="entry name" value="USP_2"/>
    <property type="match status" value="1"/>
</dbReference>
<dbReference type="PROSITE" id="PS50235">
    <property type="entry name" value="USP_3"/>
    <property type="match status" value="1"/>
</dbReference>